<feature type="chain" id="PRO_0000454654" description="Cyclomaltodextrinase">
    <location>
        <begin position="1"/>
        <end position="588"/>
    </location>
</feature>
<feature type="active site" description="Nucleophile" evidence="2">
    <location>
        <position position="328"/>
    </location>
</feature>
<feature type="active site" description="Proton donor" evidence="2">
    <location>
        <position position="357"/>
    </location>
</feature>
<feature type="binding site" evidence="2">
    <location>
        <position position="247"/>
    </location>
    <ligand>
        <name>substrate</name>
    </ligand>
</feature>
<feature type="binding site" evidence="2">
    <location>
        <position position="326"/>
    </location>
    <ligand>
        <name>substrate</name>
    </ligand>
</feature>
<feature type="binding site" evidence="2">
    <location>
        <begin position="423"/>
        <end position="424"/>
    </location>
    <ligand>
        <name>substrate</name>
    </ligand>
</feature>
<feature type="binding site" evidence="2">
    <location>
        <position position="468"/>
    </location>
    <ligand>
        <name>substrate</name>
    </ligand>
</feature>
<feature type="binding site" evidence="2">
    <location>
        <position position="472"/>
    </location>
    <ligand>
        <name>substrate</name>
    </ligand>
</feature>
<feature type="site" description="Transition state stabilizer" evidence="1">
    <location>
        <position position="424"/>
    </location>
</feature>
<evidence type="ECO:0000250" key="1">
    <source>
        <dbReference type="UniProtKB" id="P13507"/>
    </source>
</evidence>
<evidence type="ECO:0000250" key="2">
    <source>
        <dbReference type="UniProtKB" id="P38940"/>
    </source>
</evidence>
<evidence type="ECO:0000269" key="3">
    <source>
    </source>
</evidence>
<evidence type="ECO:0000303" key="4">
    <source>
    </source>
</evidence>
<evidence type="ECO:0000305" key="5"/>
<evidence type="ECO:0000312" key="6">
    <source>
        <dbReference type="EMBL" id="ESU72342.1"/>
    </source>
</evidence>
<evidence type="ECO:0000312" key="7">
    <source>
        <dbReference type="Proteomes" id="UP000018339"/>
    </source>
</evidence>
<comment type="function">
    <text evidence="3">Hydrolyzes alpha-, beta- and gamma-cyclodextrins with the highest activity with alpha-cyclodextrin (cyclomaltohexaose). Pullulan is the preferred substrate from linear substrates. Maltose is a major product of these reactions. Is also able to hydrolyze maltotriose and acarbose, and transglycosylate their hydrolytic products. Major reaction products of maltotriose and of acarbose are maltose and glucose, and glucose and pseudotrisaccharide, respectively. No activity with glucose or maltose as substrate.</text>
</comment>
<comment type="catalytic activity">
    <reaction evidence="3">
        <text>cyclomaltodextrin + H2O = linear maltodextrin</text>
        <dbReference type="Rhea" id="RHEA:23980"/>
        <dbReference type="Rhea" id="RHEA-COMP:14584"/>
        <dbReference type="Rhea" id="RHEA-COMP:14707"/>
        <dbReference type="ChEBI" id="CHEBI:15377"/>
        <dbReference type="ChEBI" id="CHEBI:17623"/>
        <dbReference type="ChEBI" id="CHEBI:18398"/>
        <dbReference type="EC" id="3.2.1.54"/>
    </reaction>
    <physiologicalReaction direction="left-to-right" evidence="3">
        <dbReference type="Rhea" id="RHEA:23981"/>
    </physiologicalReaction>
</comment>
<comment type="activity regulation">
    <text evidence="3">No metal dependence, but Mn(2+) increases the activity with alpha-cyclodextrin as substrate. No effect on the activity with presence or absence of Ca(2+), Zn(2+), Tween-20 or EDTA.</text>
</comment>
<comment type="biophysicochemical properties">
    <kinetics>
        <KM evidence="3">0.8 mM for alpha-cyclodextrin</KM>
        <KM evidence="3">0.6 mM for beta-cyclodextrin</KM>
        <KM evidence="3">0.4 mM for gamma-cyclodextrin</KM>
        <Vmax evidence="3">1200.0 umol/min/mg enzyme with alpha-cyclodextrin as substrate</Vmax>
        <Vmax evidence="3">735.0 umol/min/mg enzyme with beta-cyclodextrin as substrate</Vmax>
        <Vmax evidence="3">360.0 umol/min/mg enzyme with gamma-cyclodextrin as substrate</Vmax>
        <Vmax evidence="3">105.0 umol/min/mg enzyme with pullulan as substrate</Vmax>
        <text evidence="3">kcat is 2739 sec(-1) with alpha-cyclodextrin as substrate. kcat is 1678 sec(-1) with beta-cyclodextrin as substrate. kcat is 821 sec(-1) with gamma-cyclodextrin as substrate. kcat value calculations are based on the dimeric enzyme.</text>
    </kinetics>
    <phDependence>
        <text evidence="3">Optimum pH is 6.0 for hydrolysis of alpha-cyclodextrin.</text>
    </phDependence>
    <temperatureDependence>
        <text evidence="3">Optimum temperature is 55 degrees Celsius for hydrolysis of alpha-cyclodextrin. Thermostable. No significant loss of catalytic activity even after overnight incubation at 65 degrees. EDTA enhances the thermostability, the half-life being 90 minutes at 70 degrees Celsius in the absence of EDTA, increasing to 360 minutes in the presence of 10 mM EDTA. However, overnight incubation at 4 degrees Celsius is first required for enhancement of thermostability. Activity decreases drastically at 75 degrees Celsius.</text>
    </temperatureDependence>
</comment>
<comment type="subunit">
    <text evidence="3">Exists as a monomer or a homodimer in solution. Homodimer is more active and stable than the monomer.</text>
</comment>
<comment type="similarity">
    <text evidence="5">Belongs to the glycosyl hydrolase 13 family.</text>
</comment>
<gene>
    <name evidence="6" type="ORF">T260_08735</name>
</gene>
<organism>
    <name type="scientific">Geobacillus thermopakistaniensis (strain MAS1)</name>
    <dbReference type="NCBI Taxonomy" id="1408282"/>
    <lineage>
        <taxon>Bacteria</taxon>
        <taxon>Bacillati</taxon>
        <taxon>Bacillota</taxon>
        <taxon>Bacilli</taxon>
        <taxon>Bacillales</taxon>
        <taxon>Anoxybacillaceae</taxon>
        <taxon>Geobacillus</taxon>
    </lineage>
</organism>
<dbReference type="EC" id="3.2.1.54" evidence="3"/>
<dbReference type="EMBL" id="AYSF01000045">
    <property type="protein sequence ID" value="ESU72342.1"/>
    <property type="molecule type" value="Genomic_DNA"/>
</dbReference>
<dbReference type="RefSeq" id="WP_023633943.1">
    <property type="nucleotide sequence ID" value="NZ_AYSF01000045.1"/>
</dbReference>
<dbReference type="SMR" id="A0A7U9P668"/>
<dbReference type="Proteomes" id="UP000018339">
    <property type="component" value="Unassembled WGS sequence"/>
</dbReference>
<dbReference type="GO" id="GO:0047798">
    <property type="term" value="F:cyclomaltodextrinase activity"/>
    <property type="evidence" value="ECO:0000314"/>
    <property type="project" value="UniProtKB"/>
</dbReference>
<dbReference type="GO" id="GO:0042802">
    <property type="term" value="F:identical protein binding"/>
    <property type="evidence" value="ECO:0000314"/>
    <property type="project" value="UniProtKB"/>
</dbReference>
<dbReference type="GO" id="GO:0042803">
    <property type="term" value="F:protein homodimerization activity"/>
    <property type="evidence" value="ECO:0000314"/>
    <property type="project" value="UniProtKB"/>
</dbReference>
<dbReference type="GO" id="GO:0051678">
    <property type="term" value="P:pullulan catabolic process"/>
    <property type="evidence" value="ECO:0000314"/>
    <property type="project" value="UniProtKB"/>
</dbReference>
<dbReference type="CDD" id="cd11338">
    <property type="entry name" value="AmyAc_CMD"/>
    <property type="match status" value="1"/>
</dbReference>
<dbReference type="CDD" id="cd02857">
    <property type="entry name" value="E_set_CDase_PDE_N"/>
    <property type="match status" value="1"/>
</dbReference>
<dbReference type="Gene3D" id="3.20.20.80">
    <property type="entry name" value="Glycosidases"/>
    <property type="match status" value="1"/>
</dbReference>
<dbReference type="Gene3D" id="2.60.40.1180">
    <property type="entry name" value="Golgi alpha-mannosidase II"/>
    <property type="match status" value="1"/>
</dbReference>
<dbReference type="Gene3D" id="2.60.40.10">
    <property type="entry name" value="Immunoglobulins"/>
    <property type="match status" value="1"/>
</dbReference>
<dbReference type="Gene3D" id="3.90.400.10">
    <property type="entry name" value="Oligo-1,6-glucosidase, Domain 2"/>
    <property type="match status" value="1"/>
</dbReference>
<dbReference type="InterPro" id="IPR006047">
    <property type="entry name" value="Glyco_hydro_13_cat_dom"/>
</dbReference>
<dbReference type="InterPro" id="IPR004185">
    <property type="entry name" value="Glyco_hydro_13_lg-like_dom"/>
</dbReference>
<dbReference type="InterPro" id="IPR013780">
    <property type="entry name" value="Glyco_hydro_b"/>
</dbReference>
<dbReference type="InterPro" id="IPR017853">
    <property type="entry name" value="Glycoside_hydrolase_SF"/>
</dbReference>
<dbReference type="InterPro" id="IPR013783">
    <property type="entry name" value="Ig-like_fold"/>
</dbReference>
<dbReference type="InterPro" id="IPR032091">
    <property type="entry name" value="Malt_amylase-like_C"/>
</dbReference>
<dbReference type="InterPro" id="IPR045857">
    <property type="entry name" value="O16G_dom_2"/>
</dbReference>
<dbReference type="PANTHER" id="PTHR10357">
    <property type="entry name" value="ALPHA-AMYLASE FAMILY MEMBER"/>
    <property type="match status" value="1"/>
</dbReference>
<dbReference type="PANTHER" id="PTHR10357:SF210">
    <property type="entry name" value="MALTODEXTRIN GLUCOSIDASE"/>
    <property type="match status" value="1"/>
</dbReference>
<dbReference type="Pfam" id="PF00128">
    <property type="entry name" value="Alpha-amylase"/>
    <property type="match status" value="1"/>
</dbReference>
<dbReference type="Pfam" id="PF02903">
    <property type="entry name" value="Alpha-amylase_N"/>
    <property type="match status" value="1"/>
</dbReference>
<dbReference type="Pfam" id="PF16657">
    <property type="entry name" value="Malt_amylase_C"/>
    <property type="match status" value="1"/>
</dbReference>
<dbReference type="SMART" id="SM00642">
    <property type="entry name" value="Aamy"/>
    <property type="match status" value="1"/>
</dbReference>
<dbReference type="SUPFAM" id="SSF51445">
    <property type="entry name" value="(Trans)glycosidases"/>
    <property type="match status" value="1"/>
</dbReference>
<dbReference type="SUPFAM" id="SSF51011">
    <property type="entry name" value="Glycosyl hydrolase domain"/>
    <property type="match status" value="1"/>
</dbReference>
<name>CDAS_GEOTM</name>
<proteinExistence type="evidence at protein level"/>
<reference evidence="6 7" key="1">
    <citation type="journal article" date="2014" name="Genome Announc.">
        <title>Draft Genome Sequence of Geobacillus thermopakistaniensis Strain MAS1.</title>
        <authorList>
            <person name="Siddiqui M.A."/>
            <person name="Rashid N."/>
            <person name="Ayyampalayam S."/>
            <person name="Whitman W.B."/>
        </authorList>
    </citation>
    <scope>NUCLEOTIDE SEQUENCE [LARGE SCALE GENOMIC DNA]</scope>
    <source>
        <strain evidence="6 7">MAS1</strain>
    </source>
</reference>
<reference key="2">
    <citation type="journal article" date="2019" name="Carbohydr. Res.">
        <title>A highly active alpha-cyclodextrin preferring cyclomaltodextrinase from Geobacillus thermopakistaniensis.</title>
        <authorList>
            <person name="Aroob I."/>
            <person name="Ahmad N."/>
            <person name="Aslam M."/>
            <person name="Shaeer A."/>
            <person name="Rashid N."/>
        </authorList>
    </citation>
    <scope>FUNCTION</scope>
    <scope>CATALYTIC ACTIVITY</scope>
    <scope>SUBSTRATE SPECIFICITY</scope>
    <scope>ACTIVITY REGULATION</scope>
    <scope>BIOPHYSICOCHEMICAL PROPERTIES</scope>
    <scope>SUBUNIT</scope>
</reference>
<sequence>MRKEAIHHRSTDNFAYAYDSETLHLRLQTKKNDVDHVELLFGDPYEWHDGAWQFQTMPMRKTGSDGLFDYWLAEVKPPYRRLRYGFVLRAGGEKLVYTEKGFYHEAPSDDTAYYFCFPFLHRVDLFQAPDWVKDTVWYQIFPERFANGNPAISPKGARPWGSEDPTPTSFFGGDLQGIIDHLDYLADLGITGIYLTPIFRAPSNHKYDTADYFEIDPHFGDKETLKTLVKRCHEKGIRVMLDAVFNHCGYEFGPFQDVLKNGAASRYKDWFHIREFPLQTEPRPNYDTFAFVPQMPKLNTAHPEVKRYLLDVATYWIREFDIDGWRLDVANEIDHQFWREFRQAVKALKPDVYILGEIWHDAMPWLRGDQFDAVMNYPLADAALRFFAKEDMSASEFADRLMHVLHSYPKQVNEAAFNLLGSHDTPRLLTVCGGDVRKVKLLFLFQLTFTGSPCIYYGDEIGMTGGNDPECRKCMVWDPEKQNKELYEHVKQLIALRKQYRALRRGDVAFLAADDEVNHLVYAKTDGNETVMIIINRSNEAAEIPMPIDARGKWLVNLLTGERFAAEAETLCVSLPPYGFVLYAVESW</sequence>
<accession>A0A7U9P668</accession>
<keyword id="KW-0119">Carbohydrate metabolism</keyword>
<keyword id="KW-0326">Glycosidase</keyword>
<keyword id="KW-0378">Hydrolase</keyword>
<protein>
    <recommendedName>
        <fullName evidence="4 6">Cyclomaltodextrinase</fullName>
        <shortName evidence="4">CDase</shortName>
        <ecNumber evidence="3">3.2.1.54</ecNumber>
    </recommendedName>
    <alternativeName>
        <fullName evidence="5">Cyclomaltodextrin hydrolase, decycling</fullName>
    </alternativeName>
</protein>